<proteinExistence type="evidence at transcript level"/>
<accession>Q5NU14</accession>
<accession>Q5KSL0</accession>
<feature type="chain" id="PRO_0000361046" description="Probable E3 ubiquitin-protein ligase makorin-1">
    <location>
        <begin position="1"/>
        <end position="429"/>
    </location>
</feature>
<feature type="zinc finger region" description="C3H1-type 1" evidence="4">
    <location>
        <begin position="18"/>
        <end position="45"/>
    </location>
</feature>
<feature type="zinc finger region" description="C3H1-type 2" evidence="4">
    <location>
        <begin position="48"/>
        <end position="75"/>
    </location>
</feature>
<feature type="zinc finger region" description="C3H1-type 3" evidence="4">
    <location>
        <begin position="153"/>
        <end position="180"/>
    </location>
</feature>
<feature type="zinc finger region" description="RING-type" evidence="3">
    <location>
        <begin position="226"/>
        <end position="280"/>
    </location>
</feature>
<feature type="zinc finger region" description="C3H1-type 4" evidence="4">
    <location>
        <begin position="309"/>
        <end position="338"/>
    </location>
</feature>
<feature type="region of interest" description="Makorin-type Cys-His" evidence="2">
    <location>
        <begin position="181"/>
        <end position="208"/>
    </location>
</feature>
<feature type="region of interest" description="Disordered" evidence="5">
    <location>
        <begin position="343"/>
        <end position="362"/>
    </location>
</feature>
<feature type="compositionally biased region" description="Low complexity" evidence="5">
    <location>
        <begin position="348"/>
        <end position="358"/>
    </location>
</feature>
<feature type="splice variant" id="VSP_052995" description="In isoform b." evidence="7">
    <location>
        <begin position="52"/>
        <end position="136"/>
    </location>
</feature>
<feature type="sequence conflict" description="In Ref. 1; BAD86842." evidence="8" ref="1">
    <original>R</original>
    <variation>S</variation>
    <location>
        <position position="312"/>
    </location>
</feature>
<feature type="sequence conflict" description="In Ref. 1; BAD86842." evidence="8" ref="1">
    <original>G</original>
    <variation>S</variation>
    <location>
        <position position="321"/>
    </location>
</feature>
<evidence type="ECO:0000250" key="1"/>
<evidence type="ECO:0000255" key="2"/>
<evidence type="ECO:0000255" key="3">
    <source>
        <dbReference type="PROSITE-ProRule" id="PRU00175"/>
    </source>
</evidence>
<evidence type="ECO:0000255" key="4">
    <source>
        <dbReference type="PROSITE-ProRule" id="PRU00723"/>
    </source>
</evidence>
<evidence type="ECO:0000256" key="5">
    <source>
        <dbReference type="SAM" id="MobiDB-lite"/>
    </source>
</evidence>
<evidence type="ECO:0000269" key="6">
    <source ref="1"/>
</evidence>
<evidence type="ECO:0000303" key="7">
    <source ref="1"/>
</evidence>
<evidence type="ECO:0000305" key="8"/>
<evidence type="ECO:0000312" key="9">
    <source>
        <dbReference type="EMBL" id="BAD80899.1"/>
    </source>
</evidence>
<evidence type="ECO:0000312" key="10">
    <source>
        <dbReference type="EMBL" id="BAD86842.1"/>
    </source>
</evidence>
<reference evidence="8 9" key="1">
    <citation type="submission" date="2004-06" db="EMBL/GenBank/DDBJ databases">
        <title>Takifugu rubripes mRNA for MKRN1, complete CDS.</title>
        <authorList>
            <person name="Abe S."/>
            <person name="Kobayashi Y."/>
        </authorList>
    </citation>
    <scope>NUCLEOTIDE SEQUENCE [MRNA] (ISOFORMS A AND B)</scope>
    <source>
        <tissue evidence="10">Liver</tissue>
        <tissue evidence="9">Ovary</tissue>
    </source>
</reference>
<protein>
    <recommendedName>
        <fullName>Probable E3 ubiquitin-protein ligase makorin-1</fullName>
        <ecNumber>2.3.2.27</ecNumber>
    </recommendedName>
    <alternativeName>
        <fullName evidence="8">RING-type E3 ubiquitin transferase makorin-1</fullName>
    </alternativeName>
</protein>
<dbReference type="EC" id="2.3.2.27"/>
<dbReference type="EMBL" id="AB182269">
    <property type="protein sequence ID" value="BAD80899.1"/>
    <property type="molecule type" value="mRNA"/>
</dbReference>
<dbReference type="EMBL" id="AB185115">
    <property type="protein sequence ID" value="BAD86842.1"/>
    <property type="molecule type" value="mRNA"/>
</dbReference>
<dbReference type="RefSeq" id="NP_001072050.1">
    <molecule id="Q5NU14-1"/>
    <property type="nucleotide sequence ID" value="NM_001078582.1"/>
</dbReference>
<dbReference type="FunCoup" id="Q5NU14">
    <property type="interactions" value="293"/>
</dbReference>
<dbReference type="STRING" id="31033.ENSTRUP00000030503"/>
<dbReference type="GeneID" id="777952"/>
<dbReference type="KEGG" id="tru:777952"/>
<dbReference type="CTD" id="23608"/>
<dbReference type="eggNOG" id="KOG1039">
    <property type="taxonomic scope" value="Eukaryota"/>
</dbReference>
<dbReference type="InParanoid" id="Q5NU14"/>
<dbReference type="OrthoDB" id="411372at2759"/>
<dbReference type="UniPathway" id="UPA00143"/>
<dbReference type="Proteomes" id="UP000005226">
    <property type="component" value="Unplaced"/>
</dbReference>
<dbReference type="GO" id="GO:0061630">
    <property type="term" value="F:ubiquitin protein ligase activity"/>
    <property type="evidence" value="ECO:0007669"/>
    <property type="project" value="InterPro"/>
</dbReference>
<dbReference type="GO" id="GO:0008270">
    <property type="term" value="F:zinc ion binding"/>
    <property type="evidence" value="ECO:0007669"/>
    <property type="project" value="UniProtKB-KW"/>
</dbReference>
<dbReference type="GO" id="GO:0000209">
    <property type="term" value="P:protein polyubiquitination"/>
    <property type="evidence" value="ECO:0007669"/>
    <property type="project" value="InterPro"/>
</dbReference>
<dbReference type="CDD" id="cd16730">
    <property type="entry name" value="RING-HC_MKRN1_3"/>
    <property type="match status" value="1"/>
</dbReference>
<dbReference type="FunFam" id="3.30.40.10:FF:000117">
    <property type="entry name" value="Probable E3 ubiquitin-protein ligase makorin-1"/>
    <property type="match status" value="1"/>
</dbReference>
<dbReference type="Gene3D" id="3.30.1370.210">
    <property type="match status" value="1"/>
</dbReference>
<dbReference type="Gene3D" id="1.20.120.1350">
    <property type="entry name" value="Pneumovirus matrix protein 2 (M2), zinc-binding domain"/>
    <property type="match status" value="1"/>
</dbReference>
<dbReference type="Gene3D" id="3.30.40.10">
    <property type="entry name" value="Zinc/RING finger domain, C3HC4 (zinc finger)"/>
    <property type="match status" value="1"/>
</dbReference>
<dbReference type="InterPro" id="IPR045072">
    <property type="entry name" value="MKRN-like"/>
</dbReference>
<dbReference type="InterPro" id="IPR031644">
    <property type="entry name" value="MKRN1_C"/>
</dbReference>
<dbReference type="InterPro" id="IPR041367">
    <property type="entry name" value="Znf-CCCH_4"/>
</dbReference>
<dbReference type="InterPro" id="IPR000571">
    <property type="entry name" value="Znf_CCCH"/>
</dbReference>
<dbReference type="InterPro" id="IPR036855">
    <property type="entry name" value="Znf_CCCH_sf"/>
</dbReference>
<dbReference type="InterPro" id="IPR001841">
    <property type="entry name" value="Znf_RING"/>
</dbReference>
<dbReference type="InterPro" id="IPR013083">
    <property type="entry name" value="Znf_RING/FYVE/PHD"/>
</dbReference>
<dbReference type="InterPro" id="IPR017907">
    <property type="entry name" value="Znf_RING_CS"/>
</dbReference>
<dbReference type="PANTHER" id="PTHR11224:SF37">
    <property type="entry name" value="E3 UBIQUITIN-PROTEIN LIGASE MAKORIN-1"/>
    <property type="match status" value="1"/>
</dbReference>
<dbReference type="PANTHER" id="PTHR11224">
    <property type="entry name" value="MAKORIN-RELATED"/>
    <property type="match status" value="1"/>
</dbReference>
<dbReference type="Pfam" id="PF15815">
    <property type="entry name" value="MKRN1_C"/>
    <property type="match status" value="1"/>
</dbReference>
<dbReference type="Pfam" id="PF14608">
    <property type="entry name" value="zf-CCCH_2"/>
    <property type="match status" value="1"/>
</dbReference>
<dbReference type="Pfam" id="PF18044">
    <property type="entry name" value="zf-CCCH_4"/>
    <property type="match status" value="3"/>
</dbReference>
<dbReference type="SMART" id="SM00184">
    <property type="entry name" value="RING"/>
    <property type="match status" value="1"/>
</dbReference>
<dbReference type="SMART" id="SM00356">
    <property type="entry name" value="ZnF_C3H1"/>
    <property type="match status" value="4"/>
</dbReference>
<dbReference type="SUPFAM" id="SSF90229">
    <property type="entry name" value="CCCH zinc finger"/>
    <property type="match status" value="2"/>
</dbReference>
<dbReference type="SUPFAM" id="SSF57850">
    <property type="entry name" value="RING/U-box"/>
    <property type="match status" value="1"/>
</dbReference>
<dbReference type="PROSITE" id="PS50103">
    <property type="entry name" value="ZF_C3H1"/>
    <property type="match status" value="4"/>
</dbReference>
<dbReference type="PROSITE" id="PS00518">
    <property type="entry name" value="ZF_RING_1"/>
    <property type="match status" value="1"/>
</dbReference>
<dbReference type="PROSITE" id="PS50089">
    <property type="entry name" value="ZF_RING_2"/>
    <property type="match status" value="1"/>
</dbReference>
<sequence length="429" mass="48903">MAEAAVASTVTLPVTGGWTKHVTCRYFMHGLCKEGDNCRYSHDLTSSKPAAMMCKFFQKGNCVFGERCRFEHCKPTKSEEVSNPQMLLLSSTPPPIDPECSESGPRLKTQDWANAAEFVPGQPYCGRAESVDVEISIPLIEELNGDATTDKEELRKQLCPYAAVGECRYGVNCAYLHGDVCDMCGLQVLHPTDSSQRSEHTKACIEAHEKDMEISFAIQRSKDMMCGVCMEVVFEKANPSERRFGILSNCSHCYCLKCIRKWRSAKQFESKIIKSCPECRITSNFVIPSEYWVEDKEDKQKLIQKYKDGMGRKPCRYFDEGRGICPFGANCFYKHAFPDGRLEEAQPQRRQTGSSSRNRNSRRTQLWDIIDERESTGSLDNDDEEMVTFELSEMLLMLLAAGNDEEVTDSEDEWDLFHEELDDFYEIYL</sequence>
<name>MKRN1_TAKRU</name>
<comment type="function">
    <text evidence="1">E3 ubiquitin ligase catalyzing the covalent attachment of ubiquitin moieties onto substrate proteins.</text>
</comment>
<comment type="catalytic activity">
    <reaction>
        <text>S-ubiquitinyl-[E2 ubiquitin-conjugating enzyme]-L-cysteine + [acceptor protein]-L-lysine = [E2 ubiquitin-conjugating enzyme]-L-cysteine + N(6)-ubiquitinyl-[acceptor protein]-L-lysine.</text>
        <dbReference type="EC" id="2.3.2.27"/>
    </reaction>
</comment>
<comment type="pathway">
    <text>Protein modification; protein ubiquitination.</text>
</comment>
<comment type="alternative products">
    <event type="alternative splicing"/>
    <isoform>
        <id>Q5NU14-1</id>
        <name evidence="6">a</name>
        <sequence type="displayed"/>
    </isoform>
    <isoform>
        <id>Q5NU14-2</id>
        <name evidence="6">b</name>
        <sequence type="described" ref="VSP_052995"/>
    </isoform>
</comment>
<comment type="miscellaneous">
    <molecule>Isoform b</molecule>
    <text evidence="8">Non-canonical splice acceptor and donor sites.</text>
</comment>
<gene>
    <name evidence="9" type="primary">mkrn1</name>
</gene>
<keyword id="KW-0025">Alternative splicing</keyword>
<keyword id="KW-0479">Metal-binding</keyword>
<keyword id="KW-1185">Reference proteome</keyword>
<keyword id="KW-0677">Repeat</keyword>
<keyword id="KW-0808">Transferase</keyword>
<keyword id="KW-0833">Ubl conjugation pathway</keyword>
<keyword id="KW-0862">Zinc</keyword>
<keyword id="KW-0863">Zinc-finger</keyword>
<organism>
    <name type="scientific">Takifugu rubripes</name>
    <name type="common">Japanese pufferfish</name>
    <name type="synonym">Fugu rubripes</name>
    <dbReference type="NCBI Taxonomy" id="31033"/>
    <lineage>
        <taxon>Eukaryota</taxon>
        <taxon>Metazoa</taxon>
        <taxon>Chordata</taxon>
        <taxon>Craniata</taxon>
        <taxon>Vertebrata</taxon>
        <taxon>Euteleostomi</taxon>
        <taxon>Actinopterygii</taxon>
        <taxon>Neopterygii</taxon>
        <taxon>Teleostei</taxon>
        <taxon>Neoteleostei</taxon>
        <taxon>Acanthomorphata</taxon>
        <taxon>Eupercaria</taxon>
        <taxon>Tetraodontiformes</taxon>
        <taxon>Tetradontoidea</taxon>
        <taxon>Tetraodontidae</taxon>
        <taxon>Takifugu</taxon>
    </lineage>
</organism>